<evidence type="ECO:0000255" key="1">
    <source>
        <dbReference type="HAMAP-Rule" id="MF_01934"/>
    </source>
</evidence>
<reference key="1">
    <citation type="journal article" date="2003" name="Mol. Microbiol.">
        <title>Genome-based analysis of virulence genes in a non-biofilm-forming Staphylococcus epidermidis strain (ATCC 12228).</title>
        <authorList>
            <person name="Zhang Y.-Q."/>
            <person name="Ren S.-X."/>
            <person name="Li H.-L."/>
            <person name="Wang Y.-X."/>
            <person name="Fu G."/>
            <person name="Yang J."/>
            <person name="Qin Z.-Q."/>
            <person name="Miao Y.-G."/>
            <person name="Wang W.-Y."/>
            <person name="Chen R.-S."/>
            <person name="Shen Y."/>
            <person name="Chen Z."/>
            <person name="Yuan Z.-H."/>
            <person name="Zhao G.-P."/>
            <person name="Qu D."/>
            <person name="Danchin A."/>
            <person name="Wen Y.-M."/>
        </authorList>
    </citation>
    <scope>NUCLEOTIDE SEQUENCE [LARGE SCALE GENOMIC DNA]</scope>
    <source>
        <strain>ATCC 12228 / FDA PCI 1200</strain>
    </source>
</reference>
<feature type="chain" id="PRO_0000224821" description="1,4-dihydroxy-2-naphthoyl-CoA synthase">
    <location>
        <begin position="1"/>
        <end position="272"/>
    </location>
</feature>
<feature type="binding site" description="in other chain" evidence="1">
    <location>
        <position position="33"/>
    </location>
    <ligand>
        <name>substrate</name>
        <note>ligand shared between two neighboring subunits</note>
    </ligand>
</feature>
<feature type="binding site" description="in other chain" evidence="1">
    <location>
        <begin position="72"/>
        <end position="76"/>
    </location>
    <ligand>
        <name>substrate</name>
        <note>ligand shared between two neighboring subunits</note>
    </ligand>
</feature>
<feature type="binding site" description="in other chain" evidence="1">
    <location>
        <position position="84"/>
    </location>
    <ligand>
        <name>substrate</name>
        <note>ligand shared between two neighboring subunits</note>
    </ligand>
</feature>
<feature type="binding site" description="in other chain" evidence="1">
    <location>
        <begin position="116"/>
        <end position="120"/>
    </location>
    <ligand>
        <name>substrate</name>
        <note>ligand shared between two neighboring subunits</note>
    </ligand>
</feature>
<feature type="binding site" evidence="1">
    <location>
        <begin position="141"/>
        <end position="143"/>
    </location>
    <ligand>
        <name>hydrogencarbonate</name>
        <dbReference type="ChEBI" id="CHEBI:17544"/>
    </ligand>
</feature>
<feature type="binding site" description="in other chain" evidence="1">
    <location>
        <position position="142"/>
    </location>
    <ligand>
        <name>substrate</name>
        <note>ligand shared between two neighboring subunits</note>
    </ligand>
</feature>
<feature type="binding site" description="in other chain" evidence="1">
    <location>
        <position position="148"/>
    </location>
    <ligand>
        <name>substrate</name>
        <note>ligand shared between two neighboring subunits</note>
    </ligand>
</feature>
<feature type="binding site" evidence="1">
    <location>
        <position position="245"/>
    </location>
    <ligand>
        <name>substrate</name>
        <note>ligand shared between two neighboring subunits</note>
    </ligand>
</feature>
<feature type="binding site" evidence="1">
    <location>
        <position position="260"/>
    </location>
    <ligand>
        <name>substrate</name>
        <note>ligand shared between two neighboring subunits</note>
    </ligand>
</feature>
<feature type="site" description="Important for catalysis" evidence="1">
    <location>
        <position position="84"/>
    </location>
</feature>
<feature type="site" description="Important for catalysis" evidence="1">
    <location>
        <position position="245"/>
    </location>
</feature>
<keyword id="KW-0456">Lyase</keyword>
<keyword id="KW-0474">Menaquinone biosynthesis</keyword>
<dbReference type="EC" id="4.1.3.36" evidence="1"/>
<dbReference type="EMBL" id="AE015929">
    <property type="protein sequence ID" value="AAO04343.1"/>
    <property type="molecule type" value="Genomic_DNA"/>
</dbReference>
<dbReference type="RefSeq" id="NP_764301.1">
    <property type="nucleotide sequence ID" value="NC_004461.1"/>
</dbReference>
<dbReference type="RefSeq" id="WP_002485272.1">
    <property type="nucleotide sequence ID" value="NZ_WBME01000054.1"/>
</dbReference>
<dbReference type="SMR" id="Q8CPQ4"/>
<dbReference type="KEGG" id="sep:SE_0746"/>
<dbReference type="PATRIC" id="fig|176280.10.peg.718"/>
<dbReference type="eggNOG" id="COG0447">
    <property type="taxonomic scope" value="Bacteria"/>
</dbReference>
<dbReference type="HOGENOM" id="CLU_009834_7_7_9"/>
<dbReference type="OrthoDB" id="9775794at2"/>
<dbReference type="UniPathway" id="UPA00079"/>
<dbReference type="UniPathway" id="UPA01057">
    <property type="reaction ID" value="UER00167"/>
</dbReference>
<dbReference type="Proteomes" id="UP000001411">
    <property type="component" value="Chromosome"/>
</dbReference>
<dbReference type="GO" id="GO:0005829">
    <property type="term" value="C:cytosol"/>
    <property type="evidence" value="ECO:0007669"/>
    <property type="project" value="TreeGrafter"/>
</dbReference>
<dbReference type="GO" id="GO:0008935">
    <property type="term" value="F:1,4-dihydroxy-2-naphthoyl-CoA synthase activity"/>
    <property type="evidence" value="ECO:0007669"/>
    <property type="project" value="UniProtKB-UniRule"/>
</dbReference>
<dbReference type="GO" id="GO:0009234">
    <property type="term" value="P:menaquinone biosynthetic process"/>
    <property type="evidence" value="ECO:0007669"/>
    <property type="project" value="UniProtKB-UniRule"/>
</dbReference>
<dbReference type="CDD" id="cd06558">
    <property type="entry name" value="crotonase-like"/>
    <property type="match status" value="1"/>
</dbReference>
<dbReference type="FunFam" id="1.10.12.10:FF:000003">
    <property type="entry name" value="1,4-dihydroxy-2-naphthoyl-CoA synthase"/>
    <property type="match status" value="1"/>
</dbReference>
<dbReference type="FunFam" id="3.90.226.10:FF:000003">
    <property type="entry name" value="1,4-dihydroxy-2-naphthoyl-CoA synthase"/>
    <property type="match status" value="1"/>
</dbReference>
<dbReference type="Gene3D" id="3.90.226.10">
    <property type="entry name" value="2-enoyl-CoA Hydratase, Chain A, domain 1"/>
    <property type="match status" value="1"/>
</dbReference>
<dbReference type="Gene3D" id="1.10.12.10">
    <property type="entry name" value="Lyase 2-enoyl-coa Hydratase, Chain A, domain 2"/>
    <property type="match status" value="1"/>
</dbReference>
<dbReference type="HAMAP" id="MF_01934">
    <property type="entry name" value="MenB"/>
    <property type="match status" value="1"/>
</dbReference>
<dbReference type="InterPro" id="IPR029045">
    <property type="entry name" value="ClpP/crotonase-like_dom_sf"/>
</dbReference>
<dbReference type="InterPro" id="IPR010198">
    <property type="entry name" value="DHNA-CoA_synthase_MenB"/>
</dbReference>
<dbReference type="InterPro" id="IPR018376">
    <property type="entry name" value="Enoyl-CoA_hyd/isom_CS"/>
</dbReference>
<dbReference type="InterPro" id="IPR001753">
    <property type="entry name" value="Enoyl-CoA_hydra/iso"/>
</dbReference>
<dbReference type="InterPro" id="IPR014748">
    <property type="entry name" value="Enoyl-CoA_hydra_C"/>
</dbReference>
<dbReference type="NCBIfam" id="TIGR01929">
    <property type="entry name" value="menB"/>
    <property type="match status" value="1"/>
</dbReference>
<dbReference type="NCBIfam" id="NF005637">
    <property type="entry name" value="PRK07396.1"/>
    <property type="match status" value="1"/>
</dbReference>
<dbReference type="PANTHER" id="PTHR43113:SF1">
    <property type="entry name" value="1,4-DIHYDROXY-2-NAPHTHOYL-COA SYNTHASE, PEROXISOMAL"/>
    <property type="match status" value="1"/>
</dbReference>
<dbReference type="PANTHER" id="PTHR43113">
    <property type="entry name" value="NUCLEOSIDE-DIPHOSPHATE-SUGAR EPIMERASE"/>
    <property type="match status" value="1"/>
</dbReference>
<dbReference type="Pfam" id="PF00378">
    <property type="entry name" value="ECH_1"/>
    <property type="match status" value="1"/>
</dbReference>
<dbReference type="SUPFAM" id="SSF52096">
    <property type="entry name" value="ClpP/crotonase"/>
    <property type="match status" value="1"/>
</dbReference>
<dbReference type="PROSITE" id="PS00166">
    <property type="entry name" value="ENOYL_COA_HYDRATASE"/>
    <property type="match status" value="1"/>
</dbReference>
<sequence length="272" mass="30322">MTRQWEILREYDEIKYEFFEGIAKVTINRPEVRNAFTPKTVAEMIDAFSRARDDQNVSVIVLTGEGDKAFCSGGDQKKRGHGGYVGEDDIPRLNVLDLQRLIRVIPKPVIAMVRGYAIGGGNVLNVVCDLTIAADNAIFGQTGPKVGSFDAGYGSGYLARIVGHKKAREIWYLCRQYNAQEALDMGLVNTVVPLEQVEDETVKWCKDIMQHSPTALRFLKAAMNADTDGLAGLQQMAGDATLLYYTTDEAKEGRDAFKEKRNPDFDQFPKFP</sequence>
<protein>
    <recommendedName>
        <fullName evidence="1">1,4-dihydroxy-2-naphthoyl-CoA synthase</fullName>
        <shortName evidence="1">DHNA-CoA synthase</shortName>
        <ecNumber evidence="1">4.1.3.36</ecNumber>
    </recommendedName>
</protein>
<comment type="function">
    <text evidence="1">Converts o-succinylbenzoyl-CoA (OSB-CoA) to 1,4-dihydroxy-2-naphthoyl-CoA (DHNA-CoA).</text>
</comment>
<comment type="catalytic activity">
    <reaction evidence="1">
        <text>2-succinylbenzoyl-CoA + H(+) = 1,4-dihydroxy-2-naphthoyl-CoA + H2O</text>
        <dbReference type="Rhea" id="RHEA:26562"/>
        <dbReference type="ChEBI" id="CHEBI:15377"/>
        <dbReference type="ChEBI" id="CHEBI:15378"/>
        <dbReference type="ChEBI" id="CHEBI:57364"/>
        <dbReference type="ChEBI" id="CHEBI:58897"/>
        <dbReference type="EC" id="4.1.3.36"/>
    </reaction>
</comment>
<comment type="cofactor">
    <cofactor evidence="1">
        <name>hydrogencarbonate</name>
        <dbReference type="ChEBI" id="CHEBI:17544"/>
    </cofactor>
</comment>
<comment type="pathway">
    <text evidence="1">Quinol/quinone metabolism; 1,4-dihydroxy-2-naphthoate biosynthesis; 1,4-dihydroxy-2-naphthoate from chorismate: step 6/7.</text>
</comment>
<comment type="pathway">
    <text evidence="1">Quinol/quinone metabolism; menaquinone biosynthesis.</text>
</comment>
<comment type="similarity">
    <text evidence="1">Belongs to the enoyl-CoA hydratase/isomerase family. MenB subfamily.</text>
</comment>
<name>MENB_STAES</name>
<proteinExistence type="inferred from homology"/>
<organism>
    <name type="scientific">Staphylococcus epidermidis (strain ATCC 12228 / FDA PCI 1200)</name>
    <dbReference type="NCBI Taxonomy" id="176280"/>
    <lineage>
        <taxon>Bacteria</taxon>
        <taxon>Bacillati</taxon>
        <taxon>Bacillota</taxon>
        <taxon>Bacilli</taxon>
        <taxon>Bacillales</taxon>
        <taxon>Staphylococcaceae</taxon>
        <taxon>Staphylococcus</taxon>
    </lineage>
</organism>
<gene>
    <name evidence="1" type="primary">menB</name>
    <name type="ordered locus">SE_0746</name>
</gene>
<accession>Q8CPQ4</accession>